<feature type="chain" id="PRO_0000075232" description="Alanine--tRNA ligase">
    <location>
        <begin position="1"/>
        <end position="863"/>
    </location>
</feature>
<feature type="binding site" evidence="1">
    <location>
        <position position="561"/>
    </location>
    <ligand>
        <name>Zn(2+)</name>
        <dbReference type="ChEBI" id="CHEBI:29105"/>
    </ligand>
</feature>
<feature type="binding site" evidence="1">
    <location>
        <position position="565"/>
    </location>
    <ligand>
        <name>Zn(2+)</name>
        <dbReference type="ChEBI" id="CHEBI:29105"/>
    </ligand>
</feature>
<feature type="binding site" evidence="1">
    <location>
        <position position="663"/>
    </location>
    <ligand>
        <name>Zn(2+)</name>
        <dbReference type="ChEBI" id="CHEBI:29105"/>
    </ligand>
</feature>
<feature type="binding site" evidence="1">
    <location>
        <position position="667"/>
    </location>
    <ligand>
        <name>Zn(2+)</name>
        <dbReference type="ChEBI" id="CHEBI:29105"/>
    </ligand>
</feature>
<protein>
    <recommendedName>
        <fullName evidence="1">Alanine--tRNA ligase</fullName>
        <ecNumber evidence="1">6.1.1.7</ecNumber>
    </recommendedName>
    <alternativeName>
        <fullName evidence="1">Alanyl-tRNA synthetase</fullName>
        <shortName evidence="1">AlaRS</shortName>
    </alternativeName>
</protein>
<proteinExistence type="inferred from homology"/>
<comment type="function">
    <text evidence="1">Catalyzes the attachment of alanine to tRNA(Ala) in a two-step reaction: alanine is first activated by ATP to form Ala-AMP and then transferred to the acceptor end of tRNA(Ala). Also edits incorrectly charged Ser-tRNA(Ala) and Gly-tRNA(Ala) via its editing domain.</text>
</comment>
<comment type="catalytic activity">
    <reaction evidence="1">
        <text>tRNA(Ala) + L-alanine + ATP = L-alanyl-tRNA(Ala) + AMP + diphosphate</text>
        <dbReference type="Rhea" id="RHEA:12540"/>
        <dbReference type="Rhea" id="RHEA-COMP:9657"/>
        <dbReference type="Rhea" id="RHEA-COMP:9923"/>
        <dbReference type="ChEBI" id="CHEBI:30616"/>
        <dbReference type="ChEBI" id="CHEBI:33019"/>
        <dbReference type="ChEBI" id="CHEBI:57972"/>
        <dbReference type="ChEBI" id="CHEBI:78442"/>
        <dbReference type="ChEBI" id="CHEBI:78497"/>
        <dbReference type="ChEBI" id="CHEBI:456215"/>
        <dbReference type="EC" id="6.1.1.7"/>
    </reaction>
</comment>
<comment type="cofactor">
    <cofactor evidence="1">
        <name>Zn(2+)</name>
        <dbReference type="ChEBI" id="CHEBI:29105"/>
    </cofactor>
    <text evidence="1">Binds 1 zinc ion per subunit.</text>
</comment>
<comment type="subcellular location">
    <subcellularLocation>
        <location evidence="1">Cytoplasm</location>
    </subcellularLocation>
</comment>
<comment type="domain">
    <text evidence="1">Consists of three domains; the N-terminal catalytic domain, the editing domain and the C-terminal C-Ala domain. The editing domain removes incorrectly charged amino acids, while the C-Ala domain, along with tRNA(Ala), serves as a bridge to cooperatively bring together the editing and aminoacylation centers thus stimulating deacylation of misacylated tRNAs.</text>
</comment>
<comment type="similarity">
    <text evidence="1">Belongs to the class-II aminoacyl-tRNA synthetase family.</text>
</comment>
<sequence length="863" mass="98098">MRYMTSEEIREAFLKFFEKKGHKILPSASLIPDDPQLLFTVAGMVPFKPIFWGKVEPVYTRVATCQKCLRTVDIENVGKTPRHHTFFEMLGNFSFGDYFKEEAIEWAWEFLTQVLGVPEEKLWVSVYEEDEEAFRIWNEKIGLPEKRILRMGKEDNFWGPAGPTGPCGPDTEIFYDTGYSKGCPEGEGCTPANSEGRFVEIWNLVFTEYYQDEEGKLHPLPRKNIDTGAGLERFCAMMQGVYSNFDTDLFQPIIKRIEELTGVGYKTDEEKDVSIRVIADHIRAITFLISEGVFPSNEGRGYVLRRIIRRAMRHGILLGMSEPFLYRIVDAVVEKMGKVYPEIVRGEGMVKEVLSAEENRFLKTLEQGMKVFDEIVEKKGKIDSEDAFRLYDTYGLPLELTLEIAKEKGVEVDVQEFNKYMEEQQRKSRAAMGDVEFARRYEYLEKLPKDFRTEFTGYEKLEDEGEVVLVARDDETVEEASEGTVEVVFSRTPFYAEKGGQVSDTGMVEWRDGKALVEYVFEASEGVIVHRIKILDGTLRRGQKVILRVDKKRREATMRNHTATHLLHAALKKVLGDHVRQAGSLVAPDRLRFDFTHFKGLSSAEIEQVEDLVNEWIMEAIPVEVRYTSYEEAVKSGVVALFTEKYGDVVRVVEVPGVSKELCGGTHVKNTGQIGLFKIISEESVSSGVRRIEAVTGFSALELLRNQKKLIDQLKEILGAREDELTDRVLSLREKVKELEKKLSQGRISEERIAMKQLEDGVKVFHGVFEGVEAKHLGGIADNVLKKEGEGIVILFSKFENKVSLVVKVSENLLGKYDASSIARNIAKELGGNGGGRKNFAQAGGRHPERIKDVLERLEEFLR</sequence>
<gene>
    <name evidence="1" type="primary">alaS</name>
    <name type="ordered locus">TM_1396</name>
</gene>
<organism>
    <name type="scientific">Thermotoga maritima (strain ATCC 43589 / DSM 3109 / JCM 10099 / NBRC 100826 / MSB8)</name>
    <dbReference type="NCBI Taxonomy" id="243274"/>
    <lineage>
        <taxon>Bacteria</taxon>
        <taxon>Thermotogati</taxon>
        <taxon>Thermotogota</taxon>
        <taxon>Thermotogae</taxon>
        <taxon>Thermotogales</taxon>
        <taxon>Thermotogaceae</taxon>
        <taxon>Thermotoga</taxon>
    </lineage>
</organism>
<keyword id="KW-0030">Aminoacyl-tRNA synthetase</keyword>
<keyword id="KW-0067">ATP-binding</keyword>
<keyword id="KW-0963">Cytoplasm</keyword>
<keyword id="KW-0436">Ligase</keyword>
<keyword id="KW-0479">Metal-binding</keyword>
<keyword id="KW-0547">Nucleotide-binding</keyword>
<keyword id="KW-0648">Protein biosynthesis</keyword>
<keyword id="KW-1185">Reference proteome</keyword>
<keyword id="KW-0694">RNA-binding</keyword>
<keyword id="KW-0820">tRNA-binding</keyword>
<keyword id="KW-0862">Zinc</keyword>
<accession>Q9X1B6</accession>
<dbReference type="EC" id="6.1.1.7" evidence="1"/>
<dbReference type="EMBL" id="AE000512">
    <property type="protein sequence ID" value="AAD36467.1"/>
    <property type="molecule type" value="Genomic_DNA"/>
</dbReference>
<dbReference type="PIR" id="E72259">
    <property type="entry name" value="E72259"/>
</dbReference>
<dbReference type="RefSeq" id="NP_229197.1">
    <property type="nucleotide sequence ID" value="NC_000853.1"/>
</dbReference>
<dbReference type="RefSeq" id="WP_004081612.1">
    <property type="nucleotide sequence ID" value="NC_000853.1"/>
</dbReference>
<dbReference type="SMR" id="Q9X1B6"/>
<dbReference type="FunCoup" id="Q9X1B6">
    <property type="interactions" value="408"/>
</dbReference>
<dbReference type="STRING" id="243274.TM_1396"/>
<dbReference type="PaxDb" id="243274-THEMA_07335"/>
<dbReference type="EnsemblBacteria" id="AAD36467">
    <property type="protein sequence ID" value="AAD36467"/>
    <property type="gene ID" value="TM_1396"/>
</dbReference>
<dbReference type="KEGG" id="tma:TM1396"/>
<dbReference type="KEGG" id="tmi:THEMA_07335"/>
<dbReference type="KEGG" id="tmm:Tmari_1403"/>
<dbReference type="KEGG" id="tmw:THMA_1425"/>
<dbReference type="eggNOG" id="COG0013">
    <property type="taxonomic scope" value="Bacteria"/>
</dbReference>
<dbReference type="InParanoid" id="Q9X1B6"/>
<dbReference type="OrthoDB" id="9803884at2"/>
<dbReference type="Proteomes" id="UP000008183">
    <property type="component" value="Chromosome"/>
</dbReference>
<dbReference type="GO" id="GO:0005829">
    <property type="term" value="C:cytosol"/>
    <property type="evidence" value="ECO:0000318"/>
    <property type="project" value="GO_Central"/>
</dbReference>
<dbReference type="GO" id="GO:0004813">
    <property type="term" value="F:alanine-tRNA ligase activity"/>
    <property type="evidence" value="ECO:0000318"/>
    <property type="project" value="GO_Central"/>
</dbReference>
<dbReference type="GO" id="GO:0002161">
    <property type="term" value="F:aminoacyl-tRNA deacylase activity"/>
    <property type="evidence" value="ECO:0000318"/>
    <property type="project" value="GO_Central"/>
</dbReference>
<dbReference type="GO" id="GO:0005524">
    <property type="term" value="F:ATP binding"/>
    <property type="evidence" value="ECO:0007669"/>
    <property type="project" value="UniProtKB-UniRule"/>
</dbReference>
<dbReference type="GO" id="GO:0000049">
    <property type="term" value="F:tRNA binding"/>
    <property type="evidence" value="ECO:0007669"/>
    <property type="project" value="UniProtKB-KW"/>
</dbReference>
<dbReference type="GO" id="GO:0008270">
    <property type="term" value="F:zinc ion binding"/>
    <property type="evidence" value="ECO:0007669"/>
    <property type="project" value="UniProtKB-UniRule"/>
</dbReference>
<dbReference type="GO" id="GO:0006419">
    <property type="term" value="P:alanyl-tRNA aminoacylation"/>
    <property type="evidence" value="ECO:0000318"/>
    <property type="project" value="GO_Central"/>
</dbReference>
<dbReference type="CDD" id="cd00673">
    <property type="entry name" value="AlaRS_core"/>
    <property type="match status" value="1"/>
</dbReference>
<dbReference type="FunFam" id="2.40.30.130:FF:000001">
    <property type="entry name" value="Alanine--tRNA ligase"/>
    <property type="match status" value="1"/>
</dbReference>
<dbReference type="FunFam" id="3.10.310.40:FF:000001">
    <property type="entry name" value="Alanine--tRNA ligase"/>
    <property type="match status" value="1"/>
</dbReference>
<dbReference type="FunFam" id="3.30.54.20:FF:000001">
    <property type="entry name" value="Alanine--tRNA ligase"/>
    <property type="match status" value="1"/>
</dbReference>
<dbReference type="FunFam" id="3.30.930.10:FF:000004">
    <property type="entry name" value="Alanine--tRNA ligase"/>
    <property type="match status" value="1"/>
</dbReference>
<dbReference type="FunFam" id="3.30.980.10:FF:000004">
    <property type="entry name" value="Alanine--tRNA ligase, cytoplasmic"/>
    <property type="match status" value="1"/>
</dbReference>
<dbReference type="Gene3D" id="2.40.30.130">
    <property type="match status" value="1"/>
</dbReference>
<dbReference type="Gene3D" id="3.10.310.40">
    <property type="match status" value="1"/>
</dbReference>
<dbReference type="Gene3D" id="3.30.54.20">
    <property type="match status" value="1"/>
</dbReference>
<dbReference type="Gene3D" id="3.30.930.10">
    <property type="entry name" value="Bira Bifunctional Protein, Domain 2"/>
    <property type="match status" value="1"/>
</dbReference>
<dbReference type="Gene3D" id="3.30.980.10">
    <property type="entry name" value="Threonyl-trna Synthetase, Chain A, domain 2"/>
    <property type="match status" value="1"/>
</dbReference>
<dbReference type="HAMAP" id="MF_00036_B">
    <property type="entry name" value="Ala_tRNA_synth_B"/>
    <property type="match status" value="1"/>
</dbReference>
<dbReference type="InterPro" id="IPR045864">
    <property type="entry name" value="aa-tRNA-synth_II/BPL/LPL"/>
</dbReference>
<dbReference type="InterPro" id="IPR002318">
    <property type="entry name" value="Ala-tRNA-lgiase_IIc"/>
</dbReference>
<dbReference type="InterPro" id="IPR018162">
    <property type="entry name" value="Ala-tRNA-ligase_IIc_anticod-bd"/>
</dbReference>
<dbReference type="InterPro" id="IPR018165">
    <property type="entry name" value="Ala-tRNA-synth_IIc_core"/>
</dbReference>
<dbReference type="InterPro" id="IPR018164">
    <property type="entry name" value="Ala-tRNA-synth_IIc_N"/>
</dbReference>
<dbReference type="InterPro" id="IPR050058">
    <property type="entry name" value="Ala-tRNA_ligase"/>
</dbReference>
<dbReference type="InterPro" id="IPR023033">
    <property type="entry name" value="Ala_tRNA_ligase_euk/bac"/>
</dbReference>
<dbReference type="InterPro" id="IPR003156">
    <property type="entry name" value="DHHA1_dom"/>
</dbReference>
<dbReference type="InterPro" id="IPR018163">
    <property type="entry name" value="Thr/Ala-tRNA-synth_IIc_edit"/>
</dbReference>
<dbReference type="InterPro" id="IPR009000">
    <property type="entry name" value="Transl_B-barrel_sf"/>
</dbReference>
<dbReference type="InterPro" id="IPR012947">
    <property type="entry name" value="tRNA_SAD"/>
</dbReference>
<dbReference type="NCBIfam" id="TIGR00344">
    <property type="entry name" value="alaS"/>
    <property type="match status" value="1"/>
</dbReference>
<dbReference type="PANTHER" id="PTHR11777:SF9">
    <property type="entry name" value="ALANINE--TRNA LIGASE, CYTOPLASMIC"/>
    <property type="match status" value="1"/>
</dbReference>
<dbReference type="PANTHER" id="PTHR11777">
    <property type="entry name" value="ALANYL-TRNA SYNTHETASE"/>
    <property type="match status" value="1"/>
</dbReference>
<dbReference type="Pfam" id="PF02272">
    <property type="entry name" value="DHHA1"/>
    <property type="match status" value="1"/>
</dbReference>
<dbReference type="Pfam" id="PF01411">
    <property type="entry name" value="tRNA-synt_2c"/>
    <property type="match status" value="1"/>
</dbReference>
<dbReference type="Pfam" id="PF07973">
    <property type="entry name" value="tRNA_SAD"/>
    <property type="match status" value="1"/>
</dbReference>
<dbReference type="PRINTS" id="PR00980">
    <property type="entry name" value="TRNASYNTHALA"/>
</dbReference>
<dbReference type="SMART" id="SM00863">
    <property type="entry name" value="tRNA_SAD"/>
    <property type="match status" value="1"/>
</dbReference>
<dbReference type="SUPFAM" id="SSF55681">
    <property type="entry name" value="Class II aaRS and biotin synthetases"/>
    <property type="match status" value="1"/>
</dbReference>
<dbReference type="SUPFAM" id="SSF101353">
    <property type="entry name" value="Putative anticodon-binding domain of alanyl-tRNA synthetase (AlaRS)"/>
    <property type="match status" value="1"/>
</dbReference>
<dbReference type="SUPFAM" id="SSF55186">
    <property type="entry name" value="ThrRS/AlaRS common domain"/>
    <property type="match status" value="1"/>
</dbReference>
<dbReference type="SUPFAM" id="SSF50447">
    <property type="entry name" value="Translation proteins"/>
    <property type="match status" value="1"/>
</dbReference>
<dbReference type="PROSITE" id="PS50860">
    <property type="entry name" value="AA_TRNA_LIGASE_II_ALA"/>
    <property type="match status" value="1"/>
</dbReference>
<name>SYA_THEMA</name>
<evidence type="ECO:0000255" key="1">
    <source>
        <dbReference type="HAMAP-Rule" id="MF_00036"/>
    </source>
</evidence>
<reference key="1">
    <citation type="journal article" date="1999" name="Nature">
        <title>Evidence for lateral gene transfer between Archaea and Bacteria from genome sequence of Thermotoga maritima.</title>
        <authorList>
            <person name="Nelson K.E."/>
            <person name="Clayton R.A."/>
            <person name="Gill S.R."/>
            <person name="Gwinn M.L."/>
            <person name="Dodson R.J."/>
            <person name="Haft D.H."/>
            <person name="Hickey E.K."/>
            <person name="Peterson J.D."/>
            <person name="Nelson W.C."/>
            <person name="Ketchum K.A."/>
            <person name="McDonald L.A."/>
            <person name="Utterback T.R."/>
            <person name="Malek J.A."/>
            <person name="Linher K.D."/>
            <person name="Garrett M.M."/>
            <person name="Stewart A.M."/>
            <person name="Cotton M.D."/>
            <person name="Pratt M.S."/>
            <person name="Phillips C.A."/>
            <person name="Richardson D.L."/>
            <person name="Heidelberg J.F."/>
            <person name="Sutton G.G."/>
            <person name="Fleischmann R.D."/>
            <person name="Eisen J.A."/>
            <person name="White O."/>
            <person name="Salzberg S.L."/>
            <person name="Smith H.O."/>
            <person name="Venter J.C."/>
            <person name="Fraser C.M."/>
        </authorList>
    </citation>
    <scope>NUCLEOTIDE SEQUENCE [LARGE SCALE GENOMIC DNA]</scope>
    <source>
        <strain>ATCC 43589 / DSM 3109 / JCM 10099 / NBRC 100826 / MSB8</strain>
    </source>
</reference>